<comment type="function">
    <text>Casein kinases are operationally defined by their preferential utilization of acidic proteins such as caseins as substrates. The alpha chain contains the catalytic site.</text>
</comment>
<comment type="catalytic activity">
    <reaction>
        <text>L-seryl-[protein] + ATP = O-phospho-L-seryl-[protein] + ADP + H(+)</text>
        <dbReference type="Rhea" id="RHEA:17989"/>
        <dbReference type="Rhea" id="RHEA-COMP:9863"/>
        <dbReference type="Rhea" id="RHEA-COMP:11604"/>
        <dbReference type="ChEBI" id="CHEBI:15378"/>
        <dbReference type="ChEBI" id="CHEBI:29999"/>
        <dbReference type="ChEBI" id="CHEBI:30616"/>
        <dbReference type="ChEBI" id="CHEBI:83421"/>
        <dbReference type="ChEBI" id="CHEBI:456216"/>
        <dbReference type="EC" id="2.7.11.1"/>
    </reaction>
</comment>
<comment type="catalytic activity">
    <reaction>
        <text>L-threonyl-[protein] + ATP = O-phospho-L-threonyl-[protein] + ADP + H(+)</text>
        <dbReference type="Rhea" id="RHEA:46608"/>
        <dbReference type="Rhea" id="RHEA-COMP:11060"/>
        <dbReference type="Rhea" id="RHEA-COMP:11605"/>
        <dbReference type="ChEBI" id="CHEBI:15378"/>
        <dbReference type="ChEBI" id="CHEBI:30013"/>
        <dbReference type="ChEBI" id="CHEBI:30616"/>
        <dbReference type="ChEBI" id="CHEBI:61977"/>
        <dbReference type="ChEBI" id="CHEBI:456216"/>
        <dbReference type="EC" id="2.7.11.1"/>
    </reaction>
</comment>
<comment type="subunit">
    <text>Tetramer of two alpha and two beta chains (possible).</text>
</comment>
<comment type="similarity">
    <text evidence="1">Belongs to the protein kinase superfamily. Ser/Thr protein kinase family. CK2 subfamily.</text>
</comment>
<keyword id="KW-0002">3D-structure</keyword>
<keyword id="KW-0067">ATP-binding</keyword>
<keyword id="KW-0418">Kinase</keyword>
<keyword id="KW-0547">Nucleotide-binding</keyword>
<keyword id="KW-1185">Reference proteome</keyword>
<keyword id="KW-0723">Serine/threonine-protein kinase</keyword>
<keyword id="KW-0808">Transferase</keyword>
<reference key="1">
    <citation type="journal article" date="1991" name="Biochim. Biophys. Acta">
        <title>Cloning and sequencing of the casein kinase 2 alpha subunit from Zea mays.</title>
        <authorList>
            <person name="Dobrowolska G."/>
            <person name="Boldyreff B."/>
            <person name="Issinger O.-G."/>
        </authorList>
    </citation>
    <scope>NUCLEOTIDE SEQUENCE [MRNA]</scope>
    <source>
        <strain>cv. B73 Inbred</strain>
    </source>
</reference>
<reference key="2">
    <citation type="journal article" date="1998" name="EMBO J.">
        <title>Crystal structure of the catalytic subunit of protein kinase CK2 from Zea mays at 2.1-A resolution.</title>
        <authorList>
            <person name="Niefind K."/>
            <person name="Guerra B."/>
            <person name="Pinna L.A."/>
            <person name="Issinger O.G."/>
            <person name="Schomburg D."/>
        </authorList>
    </citation>
    <scope>X-RAY CRYSTALLOGRAPHY (2.1 ANGSTROMS)</scope>
</reference>
<evidence type="ECO:0000255" key="1">
    <source>
        <dbReference type="PROSITE-ProRule" id="PRU00159"/>
    </source>
</evidence>
<evidence type="ECO:0007829" key="2">
    <source>
        <dbReference type="PDB" id="4RLK"/>
    </source>
</evidence>
<proteinExistence type="evidence at protein level"/>
<protein>
    <recommendedName>
        <fullName>Casein kinase II subunit alpha</fullName>
        <ecNumber>2.7.11.1</ecNumber>
    </recommendedName>
    <alternativeName>
        <fullName>CK II</fullName>
    </alternativeName>
    <alternativeName>
        <fullName>CK2-alpha</fullName>
    </alternativeName>
</protein>
<gene>
    <name type="primary">ACK2</name>
</gene>
<name>CSK2A_MAIZE</name>
<feature type="chain" id="PRO_0000085901" description="Casein kinase II subunit alpha">
    <location>
        <begin position="1"/>
        <end position="332"/>
    </location>
</feature>
<feature type="domain" description="Protein kinase" evidence="1">
    <location>
        <begin position="34"/>
        <end position="319"/>
    </location>
</feature>
<feature type="active site" description="Proton acceptor">
    <location>
        <position position="151"/>
    </location>
</feature>
<feature type="binding site">
    <location>
        <begin position="40"/>
        <end position="48"/>
    </location>
    <ligand>
        <name>ATP</name>
        <dbReference type="ChEBI" id="CHEBI:30616"/>
    </ligand>
</feature>
<feature type="binding site">
    <location>
        <position position="63"/>
    </location>
    <ligand>
        <name>ATP</name>
        <dbReference type="ChEBI" id="CHEBI:30616"/>
    </ligand>
</feature>
<feature type="strand" evidence="2">
    <location>
        <begin position="5"/>
        <end position="7"/>
    </location>
</feature>
<feature type="helix" evidence="2">
    <location>
        <begin position="10"/>
        <end position="13"/>
    </location>
</feature>
<feature type="helix" evidence="2">
    <location>
        <begin position="16"/>
        <end position="19"/>
    </location>
</feature>
<feature type="helix" evidence="2">
    <location>
        <begin position="21"/>
        <end position="23"/>
    </location>
</feature>
<feature type="helix" evidence="2">
    <location>
        <begin position="31"/>
        <end position="33"/>
    </location>
</feature>
<feature type="strand" evidence="2">
    <location>
        <begin position="34"/>
        <end position="43"/>
    </location>
</feature>
<feature type="strand" evidence="2">
    <location>
        <begin position="46"/>
        <end position="53"/>
    </location>
</feature>
<feature type="turn" evidence="2">
    <location>
        <begin position="54"/>
        <end position="57"/>
    </location>
</feature>
<feature type="strand" evidence="2">
    <location>
        <begin position="58"/>
        <end position="65"/>
    </location>
</feature>
<feature type="helix" evidence="2">
    <location>
        <begin position="70"/>
        <end position="83"/>
    </location>
</feature>
<feature type="strand" evidence="2">
    <location>
        <begin position="92"/>
        <end position="97"/>
    </location>
</feature>
<feature type="turn" evidence="2">
    <location>
        <begin position="99"/>
        <end position="101"/>
    </location>
</feature>
<feature type="strand" evidence="2">
    <location>
        <begin position="104"/>
        <end position="109"/>
    </location>
</feature>
<feature type="helix" evidence="2">
    <location>
        <begin position="116"/>
        <end position="119"/>
    </location>
</feature>
<feature type="helix" evidence="2">
    <location>
        <begin position="120"/>
        <end position="122"/>
    </location>
</feature>
<feature type="helix" evidence="2">
    <location>
        <begin position="125"/>
        <end position="144"/>
    </location>
</feature>
<feature type="helix" evidence="2">
    <location>
        <begin position="154"/>
        <end position="156"/>
    </location>
</feature>
<feature type="strand" evidence="2">
    <location>
        <begin position="157"/>
        <end position="160"/>
    </location>
</feature>
<feature type="turn" evidence="2">
    <location>
        <begin position="161"/>
        <end position="164"/>
    </location>
</feature>
<feature type="strand" evidence="2">
    <location>
        <begin position="165"/>
        <end position="168"/>
    </location>
</feature>
<feature type="helix" evidence="2">
    <location>
        <begin position="171"/>
        <end position="173"/>
    </location>
</feature>
<feature type="helix" evidence="2">
    <location>
        <begin position="190"/>
        <end position="192"/>
    </location>
</feature>
<feature type="helix" evidence="2">
    <location>
        <begin position="195"/>
        <end position="198"/>
    </location>
</feature>
<feature type="helix" evidence="2">
    <location>
        <begin position="207"/>
        <end position="222"/>
    </location>
</feature>
<feature type="strand" evidence="2">
    <location>
        <begin position="225"/>
        <end position="228"/>
    </location>
</feature>
<feature type="helix" evidence="2">
    <location>
        <begin position="233"/>
        <end position="244"/>
    </location>
</feature>
<feature type="helix" evidence="2">
    <location>
        <begin position="246"/>
        <end position="255"/>
    </location>
</feature>
<feature type="helix" evidence="2">
    <location>
        <begin position="262"/>
        <end position="268"/>
    </location>
</feature>
<feature type="helix" evidence="2">
    <location>
        <begin position="276"/>
        <end position="279"/>
    </location>
</feature>
<feature type="turn" evidence="2">
    <location>
        <begin position="282"/>
        <end position="284"/>
    </location>
</feature>
<feature type="helix" evidence="2">
    <location>
        <begin position="285"/>
        <end position="287"/>
    </location>
</feature>
<feature type="helix" evidence="2">
    <location>
        <begin position="290"/>
        <end position="299"/>
    </location>
</feature>
<feature type="helix" evidence="2">
    <location>
        <begin position="304"/>
        <end position="306"/>
    </location>
</feature>
<feature type="helix" evidence="2">
    <location>
        <begin position="310"/>
        <end position="315"/>
    </location>
</feature>
<feature type="helix" evidence="2">
    <location>
        <begin position="317"/>
        <end position="319"/>
    </location>
</feature>
<feature type="helix" evidence="2">
    <location>
        <begin position="320"/>
        <end position="326"/>
    </location>
</feature>
<dbReference type="EC" id="2.7.11.1"/>
<dbReference type="EMBL" id="X61387">
    <property type="protein sequence ID" value="CAA43659.1"/>
    <property type="molecule type" value="mRNA"/>
</dbReference>
<dbReference type="PIR" id="S19726">
    <property type="entry name" value="S19726"/>
</dbReference>
<dbReference type="RefSeq" id="XP_008668648.1">
    <property type="nucleotide sequence ID" value="XM_008670426.1"/>
</dbReference>
<dbReference type="PDB" id="1DAW">
    <property type="method" value="X-ray"/>
    <property type="resolution" value="2.20 A"/>
    <property type="chains" value="A=2-328"/>
</dbReference>
<dbReference type="PDB" id="1DAY">
    <property type="method" value="X-ray"/>
    <property type="resolution" value="2.20 A"/>
    <property type="chains" value="A=2-328"/>
</dbReference>
<dbReference type="PDB" id="1DS5">
    <property type="method" value="X-ray"/>
    <property type="resolution" value="3.16 A"/>
    <property type="chains" value="A/B/C/D=1-332"/>
</dbReference>
<dbReference type="PDB" id="1F0Q">
    <property type="method" value="X-ray"/>
    <property type="resolution" value="2.63 A"/>
    <property type="chains" value="A=1-332"/>
</dbReference>
<dbReference type="PDB" id="1J91">
    <property type="method" value="X-ray"/>
    <property type="resolution" value="2.22 A"/>
    <property type="chains" value="A/B=1-332"/>
</dbReference>
<dbReference type="PDB" id="1JAM">
    <property type="method" value="X-ray"/>
    <property type="resolution" value="2.18 A"/>
    <property type="chains" value="A=1-332"/>
</dbReference>
<dbReference type="PDB" id="1LP4">
    <property type="method" value="X-ray"/>
    <property type="resolution" value="1.86 A"/>
    <property type="chains" value="A=1-332"/>
</dbReference>
<dbReference type="PDB" id="1LPU">
    <property type="method" value="X-ray"/>
    <property type="resolution" value="1.86 A"/>
    <property type="chains" value="A=1-332"/>
</dbReference>
<dbReference type="PDB" id="1LR4">
    <property type="method" value="X-ray"/>
    <property type="resolution" value="2.00 A"/>
    <property type="chains" value="A=1-332"/>
</dbReference>
<dbReference type="PDB" id="1M2P">
    <property type="method" value="X-ray"/>
    <property type="resolution" value="2.00 A"/>
    <property type="chains" value="A=2-326"/>
</dbReference>
<dbReference type="PDB" id="1M2Q">
    <property type="method" value="X-ray"/>
    <property type="resolution" value="1.79 A"/>
    <property type="chains" value="A=2-328"/>
</dbReference>
<dbReference type="PDB" id="1M2R">
    <property type="method" value="X-ray"/>
    <property type="resolution" value="1.70 A"/>
    <property type="chains" value="A=2-328"/>
</dbReference>
<dbReference type="PDB" id="1OM1">
    <property type="method" value="X-ray"/>
    <property type="resolution" value="1.68 A"/>
    <property type="chains" value="A=1-332"/>
</dbReference>
<dbReference type="PDB" id="1ZOE">
    <property type="method" value="X-ray"/>
    <property type="resolution" value="1.77 A"/>
    <property type="chains" value="A=1-332"/>
</dbReference>
<dbReference type="PDB" id="1ZOG">
    <property type="method" value="X-ray"/>
    <property type="resolution" value="2.30 A"/>
    <property type="chains" value="A=1-332"/>
</dbReference>
<dbReference type="PDB" id="1ZOH">
    <property type="method" value="X-ray"/>
    <property type="resolution" value="1.81 A"/>
    <property type="chains" value="A=1-332"/>
</dbReference>
<dbReference type="PDB" id="2OXD">
    <property type="method" value="X-ray"/>
    <property type="resolution" value="2.30 A"/>
    <property type="chains" value="A=1-332"/>
</dbReference>
<dbReference type="PDB" id="2OXX">
    <property type="method" value="X-ray"/>
    <property type="resolution" value="2.30 A"/>
    <property type="chains" value="A=1-332"/>
</dbReference>
<dbReference type="PDB" id="2OXY">
    <property type="method" value="X-ray"/>
    <property type="resolution" value="1.81 A"/>
    <property type="chains" value="A/B=1-332"/>
</dbReference>
<dbReference type="PDB" id="2PVH">
    <property type="method" value="X-ray"/>
    <property type="resolution" value="2.20 A"/>
    <property type="chains" value="A=1-332"/>
</dbReference>
<dbReference type="PDB" id="2PVJ">
    <property type="method" value="X-ray"/>
    <property type="resolution" value="1.70 A"/>
    <property type="chains" value="A=1-332"/>
</dbReference>
<dbReference type="PDB" id="2PVK">
    <property type="method" value="X-ray"/>
    <property type="resolution" value="1.90 A"/>
    <property type="chains" value="A=1-332"/>
</dbReference>
<dbReference type="PDB" id="2PVL">
    <property type="method" value="X-ray"/>
    <property type="resolution" value="1.90 A"/>
    <property type="chains" value="A=1-332"/>
</dbReference>
<dbReference type="PDB" id="2PVM">
    <property type="method" value="X-ray"/>
    <property type="resolution" value="2.00 A"/>
    <property type="chains" value="A=1-332"/>
</dbReference>
<dbReference type="PDB" id="2PVN">
    <property type="method" value="X-ray"/>
    <property type="resolution" value="2.00 A"/>
    <property type="chains" value="A=1-332"/>
</dbReference>
<dbReference type="PDB" id="2QC6">
    <property type="method" value="X-ray"/>
    <property type="resolution" value="1.85 A"/>
    <property type="chains" value="A=1-332"/>
</dbReference>
<dbReference type="PDB" id="3BE9">
    <property type="method" value="X-ray"/>
    <property type="resolution" value="2.00 A"/>
    <property type="chains" value="A=1-332"/>
</dbReference>
<dbReference type="PDB" id="3FL5">
    <property type="method" value="X-ray"/>
    <property type="resolution" value="2.30 A"/>
    <property type="chains" value="A=1-332"/>
</dbReference>
<dbReference type="PDB" id="3KXG">
    <property type="method" value="X-ray"/>
    <property type="resolution" value="1.70 A"/>
    <property type="chains" value="A=2-328"/>
</dbReference>
<dbReference type="PDB" id="3KXH">
    <property type="method" value="X-ray"/>
    <property type="resolution" value="1.70 A"/>
    <property type="chains" value="A=2-328"/>
</dbReference>
<dbReference type="PDB" id="3KXM">
    <property type="method" value="X-ray"/>
    <property type="resolution" value="1.75 A"/>
    <property type="chains" value="A=2-328"/>
</dbReference>
<dbReference type="PDB" id="3KXN">
    <property type="method" value="X-ray"/>
    <property type="resolution" value="2.00 A"/>
    <property type="chains" value="A=2-328"/>
</dbReference>
<dbReference type="PDB" id="3PVG">
    <property type="method" value="X-ray"/>
    <property type="resolution" value="1.50 A"/>
    <property type="chains" value="A=2-332"/>
</dbReference>
<dbReference type="PDB" id="3PWD">
    <property type="method" value="X-ray"/>
    <property type="resolution" value="2.20 A"/>
    <property type="chains" value="A=1-332"/>
</dbReference>
<dbReference type="PDB" id="3PZH">
    <property type="method" value="X-ray"/>
    <property type="resolution" value="1.92 A"/>
    <property type="chains" value="A=1-332"/>
</dbReference>
<dbReference type="PDB" id="4ANM">
    <property type="method" value="X-ray"/>
    <property type="resolution" value="1.70 A"/>
    <property type="chains" value="A=2-332"/>
</dbReference>
<dbReference type="PDB" id="4DGM">
    <property type="method" value="X-ray"/>
    <property type="resolution" value="1.65 A"/>
    <property type="chains" value="A=2-327"/>
</dbReference>
<dbReference type="PDB" id="4DGN">
    <property type="method" value="X-ray"/>
    <property type="resolution" value="1.75 A"/>
    <property type="chains" value="A=2-327"/>
</dbReference>
<dbReference type="PDB" id="4RLK">
    <property type="method" value="X-ray"/>
    <property type="resolution" value="1.24 A"/>
    <property type="chains" value="A=1-332"/>
</dbReference>
<dbReference type="PDB" id="5TS8">
    <property type="method" value="X-ray"/>
    <property type="resolution" value="1.45 A"/>
    <property type="chains" value="A=1-332"/>
</dbReference>
<dbReference type="PDB" id="6QS5">
    <property type="method" value="X-ray"/>
    <property type="resolution" value="1.96 A"/>
    <property type="chains" value="A=2-326"/>
</dbReference>
<dbReference type="PDBsum" id="1DAW"/>
<dbReference type="PDBsum" id="1DAY"/>
<dbReference type="PDBsum" id="1DS5"/>
<dbReference type="PDBsum" id="1F0Q"/>
<dbReference type="PDBsum" id="1J91"/>
<dbReference type="PDBsum" id="1JAM"/>
<dbReference type="PDBsum" id="1LP4"/>
<dbReference type="PDBsum" id="1LPU"/>
<dbReference type="PDBsum" id="1LR4"/>
<dbReference type="PDBsum" id="1M2P"/>
<dbReference type="PDBsum" id="1M2Q"/>
<dbReference type="PDBsum" id="1M2R"/>
<dbReference type="PDBsum" id="1OM1"/>
<dbReference type="PDBsum" id="1ZOE"/>
<dbReference type="PDBsum" id="1ZOG"/>
<dbReference type="PDBsum" id="1ZOH"/>
<dbReference type="PDBsum" id="2OXD"/>
<dbReference type="PDBsum" id="2OXX"/>
<dbReference type="PDBsum" id="2OXY"/>
<dbReference type="PDBsum" id="2PVH"/>
<dbReference type="PDBsum" id="2PVJ"/>
<dbReference type="PDBsum" id="2PVK"/>
<dbReference type="PDBsum" id="2PVL"/>
<dbReference type="PDBsum" id="2PVM"/>
<dbReference type="PDBsum" id="2PVN"/>
<dbReference type="PDBsum" id="2QC6"/>
<dbReference type="PDBsum" id="3BE9"/>
<dbReference type="PDBsum" id="3FL5"/>
<dbReference type="PDBsum" id="3KXG"/>
<dbReference type="PDBsum" id="3KXH"/>
<dbReference type="PDBsum" id="3KXM"/>
<dbReference type="PDBsum" id="3KXN"/>
<dbReference type="PDBsum" id="3PVG"/>
<dbReference type="PDBsum" id="3PWD"/>
<dbReference type="PDBsum" id="3PZH"/>
<dbReference type="PDBsum" id="4ANM"/>
<dbReference type="PDBsum" id="4DGM"/>
<dbReference type="PDBsum" id="4DGN"/>
<dbReference type="PDBsum" id="4RLK"/>
<dbReference type="PDBsum" id="5TS8"/>
<dbReference type="PDBsum" id="6QS5"/>
<dbReference type="SMR" id="P28523"/>
<dbReference type="IntAct" id="P28523">
    <property type="interactions" value="1"/>
</dbReference>
<dbReference type="STRING" id="4577.P28523"/>
<dbReference type="BindingDB" id="P28523"/>
<dbReference type="ChEMBL" id="CHEMBL4514"/>
<dbReference type="PaxDb" id="4577-GRMZM5G845755_P02"/>
<dbReference type="EnsemblPlants" id="Zm00001eb118100_T001">
    <property type="protein sequence ID" value="Zm00001eb118100_P001"/>
    <property type="gene ID" value="Zm00001eb118100"/>
</dbReference>
<dbReference type="Gramene" id="Zm00001eb118100_T001">
    <property type="protein sequence ID" value="Zm00001eb118100_P001"/>
    <property type="gene ID" value="Zm00001eb118100"/>
</dbReference>
<dbReference type="MaizeGDB" id="30032"/>
<dbReference type="eggNOG" id="KOG0668">
    <property type="taxonomic scope" value="Eukaryota"/>
</dbReference>
<dbReference type="HOGENOM" id="CLU_000288_70_4_1"/>
<dbReference type="InParanoid" id="P28523"/>
<dbReference type="OMA" id="ECHMIEW"/>
<dbReference type="BRENDA" id="2.7.11.1">
    <property type="organism ID" value="6752"/>
</dbReference>
<dbReference type="EvolutionaryTrace" id="P28523"/>
<dbReference type="PRO" id="PR:P28523"/>
<dbReference type="Proteomes" id="UP000007305">
    <property type="component" value="Chromosome 2"/>
</dbReference>
<dbReference type="ExpressionAtlas" id="P28523">
    <property type="expression patterns" value="baseline and differential"/>
</dbReference>
<dbReference type="GO" id="GO:0005829">
    <property type="term" value="C:cytosol"/>
    <property type="evidence" value="ECO:0000318"/>
    <property type="project" value="GO_Central"/>
</dbReference>
<dbReference type="GO" id="GO:0005634">
    <property type="term" value="C:nucleus"/>
    <property type="evidence" value="ECO:0000318"/>
    <property type="project" value="GO_Central"/>
</dbReference>
<dbReference type="GO" id="GO:0005956">
    <property type="term" value="C:protein kinase CK2 complex"/>
    <property type="evidence" value="ECO:0000318"/>
    <property type="project" value="GO_Central"/>
</dbReference>
<dbReference type="GO" id="GO:0005524">
    <property type="term" value="F:ATP binding"/>
    <property type="evidence" value="ECO:0007669"/>
    <property type="project" value="UniProtKB-KW"/>
</dbReference>
<dbReference type="GO" id="GO:0106310">
    <property type="term" value="F:protein serine kinase activity"/>
    <property type="evidence" value="ECO:0007669"/>
    <property type="project" value="RHEA"/>
</dbReference>
<dbReference type="GO" id="GO:0004674">
    <property type="term" value="F:protein serine/threonine kinase activity"/>
    <property type="evidence" value="ECO:0000318"/>
    <property type="project" value="GO_Central"/>
</dbReference>
<dbReference type="GO" id="GO:0006974">
    <property type="term" value="P:DNA damage response"/>
    <property type="evidence" value="ECO:0000318"/>
    <property type="project" value="GO_Central"/>
</dbReference>
<dbReference type="GO" id="GO:0051726">
    <property type="term" value="P:regulation of cell cycle"/>
    <property type="evidence" value="ECO:0000318"/>
    <property type="project" value="GO_Central"/>
</dbReference>
<dbReference type="CDD" id="cd14132">
    <property type="entry name" value="STKc_CK2_alpha"/>
    <property type="match status" value="1"/>
</dbReference>
<dbReference type="FunFam" id="1.10.510.10:FF:000059">
    <property type="entry name" value="Casein kinase II subunit alpha"/>
    <property type="match status" value="1"/>
</dbReference>
<dbReference type="FunFam" id="3.30.200.20:FF:000088">
    <property type="entry name" value="Casein kinase II subunit alpha"/>
    <property type="match status" value="1"/>
</dbReference>
<dbReference type="Gene3D" id="3.30.200.20">
    <property type="entry name" value="Phosphorylase Kinase, domain 1"/>
    <property type="match status" value="1"/>
</dbReference>
<dbReference type="Gene3D" id="1.10.510.10">
    <property type="entry name" value="Transferase(Phosphotransferase) domain 1"/>
    <property type="match status" value="1"/>
</dbReference>
<dbReference type="InterPro" id="IPR045216">
    <property type="entry name" value="CK2_alpha"/>
</dbReference>
<dbReference type="InterPro" id="IPR011009">
    <property type="entry name" value="Kinase-like_dom_sf"/>
</dbReference>
<dbReference type="InterPro" id="IPR000719">
    <property type="entry name" value="Prot_kinase_dom"/>
</dbReference>
<dbReference type="InterPro" id="IPR017441">
    <property type="entry name" value="Protein_kinase_ATP_BS"/>
</dbReference>
<dbReference type="InterPro" id="IPR008271">
    <property type="entry name" value="Ser/Thr_kinase_AS"/>
</dbReference>
<dbReference type="PANTHER" id="PTHR24054">
    <property type="entry name" value="CASEIN KINASE II SUBUNIT ALPHA"/>
    <property type="match status" value="1"/>
</dbReference>
<dbReference type="PANTHER" id="PTHR24054:SF52">
    <property type="entry name" value="CASEIN KINASE II SUBUNIT ALPHA"/>
    <property type="match status" value="1"/>
</dbReference>
<dbReference type="Pfam" id="PF00069">
    <property type="entry name" value="Pkinase"/>
    <property type="match status" value="1"/>
</dbReference>
<dbReference type="SMART" id="SM00220">
    <property type="entry name" value="S_TKc"/>
    <property type="match status" value="1"/>
</dbReference>
<dbReference type="SUPFAM" id="SSF56112">
    <property type="entry name" value="Protein kinase-like (PK-like)"/>
    <property type="match status" value="1"/>
</dbReference>
<dbReference type="PROSITE" id="PS00107">
    <property type="entry name" value="PROTEIN_KINASE_ATP"/>
    <property type="match status" value="1"/>
</dbReference>
<dbReference type="PROSITE" id="PS50011">
    <property type="entry name" value="PROTEIN_KINASE_DOM"/>
    <property type="match status" value="1"/>
</dbReference>
<dbReference type="PROSITE" id="PS00108">
    <property type="entry name" value="PROTEIN_KINASE_ST"/>
    <property type="match status" value="1"/>
</dbReference>
<organism>
    <name type="scientific">Zea mays</name>
    <name type="common">Maize</name>
    <dbReference type="NCBI Taxonomy" id="4577"/>
    <lineage>
        <taxon>Eukaryota</taxon>
        <taxon>Viridiplantae</taxon>
        <taxon>Streptophyta</taxon>
        <taxon>Embryophyta</taxon>
        <taxon>Tracheophyta</taxon>
        <taxon>Spermatophyta</taxon>
        <taxon>Magnoliopsida</taxon>
        <taxon>Liliopsida</taxon>
        <taxon>Poales</taxon>
        <taxon>Poaceae</taxon>
        <taxon>PACMAD clade</taxon>
        <taxon>Panicoideae</taxon>
        <taxon>Andropogonodae</taxon>
        <taxon>Andropogoneae</taxon>
        <taxon>Tripsacinae</taxon>
        <taxon>Zea</taxon>
    </lineage>
</organism>
<sequence length="332" mass="39230">MSKARVYADVNVLRPKEYWDYEALTVQWGEQDDYEVVRKVGRGKYSEVFEGINVNNNEKCIIKILKPVKKKKIKREIKILQNLCGGPNIVKLLDIVRDQHSKTPSLIFEYVNNTDFKVLYPTLTDYDIRYYIYELLKALDYCHSQGIMHRDVKPHNVMIDHELRKLRLIDWGLAEFYHPGKEYNVRVASRYFKGPELLVDLQDYDYSLDMWSLGCMFAGMIFRKEPFFYGHDNHDQLVKIAKVLGTDGLNVYLNKYRIELDPQLEALVGRHSRKPWLKFMNADNQHLVSPEAIDFLDKLLRYDHQERLTALEAMTHPYFQQVRAAENSRTRA</sequence>
<accession>P28523</accession>